<accession>A4ITL1</accession>
<protein>
    <recommendedName>
        <fullName evidence="1">Large ribosomal subunit protein bL31</fullName>
    </recommendedName>
    <alternativeName>
        <fullName evidence="2">50S ribosomal protein L31</fullName>
    </alternativeName>
</protein>
<name>RL31_GEOTN</name>
<sequence length="66" mass="7440">MKQGIHPAYKKVIVRCACGNEFESGSVKDELRVEICSECHPFFTGKQKFVSAAGRVDKFNKKYGLK</sequence>
<feature type="chain" id="PRO_1000126636" description="Large ribosomal subunit protein bL31">
    <location>
        <begin position="1"/>
        <end position="66"/>
    </location>
</feature>
<feature type="binding site" evidence="1">
    <location>
        <position position="16"/>
    </location>
    <ligand>
        <name>Zn(2+)</name>
        <dbReference type="ChEBI" id="CHEBI:29105"/>
    </ligand>
</feature>
<feature type="binding site" evidence="1">
    <location>
        <position position="18"/>
    </location>
    <ligand>
        <name>Zn(2+)</name>
        <dbReference type="ChEBI" id="CHEBI:29105"/>
    </ligand>
</feature>
<feature type="binding site" evidence="1">
    <location>
        <position position="36"/>
    </location>
    <ligand>
        <name>Zn(2+)</name>
        <dbReference type="ChEBI" id="CHEBI:29105"/>
    </ligand>
</feature>
<feature type="binding site" evidence="1">
    <location>
        <position position="39"/>
    </location>
    <ligand>
        <name>Zn(2+)</name>
        <dbReference type="ChEBI" id="CHEBI:29105"/>
    </ligand>
</feature>
<reference key="1">
    <citation type="journal article" date="2007" name="Proc. Natl. Acad. Sci. U.S.A.">
        <title>Genome and proteome of long-chain alkane degrading Geobacillus thermodenitrificans NG80-2 isolated from a deep-subsurface oil reservoir.</title>
        <authorList>
            <person name="Feng L."/>
            <person name="Wang W."/>
            <person name="Cheng J."/>
            <person name="Ren Y."/>
            <person name="Zhao G."/>
            <person name="Gao C."/>
            <person name="Tang Y."/>
            <person name="Liu X."/>
            <person name="Han W."/>
            <person name="Peng X."/>
            <person name="Liu R."/>
            <person name="Wang L."/>
        </authorList>
    </citation>
    <scope>NUCLEOTIDE SEQUENCE [LARGE SCALE GENOMIC DNA]</scope>
    <source>
        <strain>NG80-2</strain>
    </source>
</reference>
<gene>
    <name evidence="1" type="primary">rpmE</name>
    <name type="ordered locus">GTNG_3326</name>
</gene>
<comment type="function">
    <text evidence="1">Binds the 23S rRNA.</text>
</comment>
<comment type="cofactor">
    <cofactor evidence="1">
        <name>Zn(2+)</name>
        <dbReference type="ChEBI" id="CHEBI:29105"/>
    </cofactor>
    <text evidence="1">Binds 1 zinc ion per subunit.</text>
</comment>
<comment type="subunit">
    <text evidence="1">Part of the 50S ribosomal subunit.</text>
</comment>
<comment type="similarity">
    <text evidence="1">Belongs to the bacterial ribosomal protein bL31 family. Type A subfamily.</text>
</comment>
<keyword id="KW-0479">Metal-binding</keyword>
<keyword id="KW-0687">Ribonucleoprotein</keyword>
<keyword id="KW-0689">Ribosomal protein</keyword>
<keyword id="KW-0694">RNA-binding</keyword>
<keyword id="KW-0699">rRNA-binding</keyword>
<keyword id="KW-0862">Zinc</keyword>
<organism>
    <name type="scientific">Geobacillus thermodenitrificans (strain NG80-2)</name>
    <dbReference type="NCBI Taxonomy" id="420246"/>
    <lineage>
        <taxon>Bacteria</taxon>
        <taxon>Bacillati</taxon>
        <taxon>Bacillota</taxon>
        <taxon>Bacilli</taxon>
        <taxon>Bacillales</taxon>
        <taxon>Anoxybacillaceae</taxon>
        <taxon>Geobacillus</taxon>
    </lineage>
</organism>
<evidence type="ECO:0000255" key="1">
    <source>
        <dbReference type="HAMAP-Rule" id="MF_00501"/>
    </source>
</evidence>
<evidence type="ECO:0000305" key="2"/>
<dbReference type="EMBL" id="CP000557">
    <property type="protein sequence ID" value="ABO68665.1"/>
    <property type="molecule type" value="Genomic_DNA"/>
</dbReference>
<dbReference type="RefSeq" id="WP_008880715.1">
    <property type="nucleotide sequence ID" value="NC_009328.1"/>
</dbReference>
<dbReference type="SMR" id="A4ITL1"/>
<dbReference type="GeneID" id="87622564"/>
<dbReference type="GeneID" id="89613455"/>
<dbReference type="KEGG" id="gtn:GTNG_3326"/>
<dbReference type="eggNOG" id="COG0254">
    <property type="taxonomic scope" value="Bacteria"/>
</dbReference>
<dbReference type="HOGENOM" id="CLU_114306_4_3_9"/>
<dbReference type="Proteomes" id="UP000001578">
    <property type="component" value="Chromosome"/>
</dbReference>
<dbReference type="GO" id="GO:1990904">
    <property type="term" value="C:ribonucleoprotein complex"/>
    <property type="evidence" value="ECO:0007669"/>
    <property type="project" value="UniProtKB-KW"/>
</dbReference>
<dbReference type="GO" id="GO:0005840">
    <property type="term" value="C:ribosome"/>
    <property type="evidence" value="ECO:0007669"/>
    <property type="project" value="UniProtKB-KW"/>
</dbReference>
<dbReference type="GO" id="GO:0046872">
    <property type="term" value="F:metal ion binding"/>
    <property type="evidence" value="ECO:0007669"/>
    <property type="project" value="UniProtKB-KW"/>
</dbReference>
<dbReference type="GO" id="GO:0019843">
    <property type="term" value="F:rRNA binding"/>
    <property type="evidence" value="ECO:0007669"/>
    <property type="project" value="UniProtKB-KW"/>
</dbReference>
<dbReference type="GO" id="GO:0003735">
    <property type="term" value="F:structural constituent of ribosome"/>
    <property type="evidence" value="ECO:0007669"/>
    <property type="project" value="InterPro"/>
</dbReference>
<dbReference type="GO" id="GO:0006412">
    <property type="term" value="P:translation"/>
    <property type="evidence" value="ECO:0007669"/>
    <property type="project" value="UniProtKB-UniRule"/>
</dbReference>
<dbReference type="Gene3D" id="4.10.830.30">
    <property type="entry name" value="Ribosomal protein L31"/>
    <property type="match status" value="1"/>
</dbReference>
<dbReference type="HAMAP" id="MF_00501">
    <property type="entry name" value="Ribosomal_bL31_1"/>
    <property type="match status" value="1"/>
</dbReference>
<dbReference type="InterPro" id="IPR034704">
    <property type="entry name" value="Ribosomal_bL28/bL31-like_sf"/>
</dbReference>
<dbReference type="InterPro" id="IPR002150">
    <property type="entry name" value="Ribosomal_bL31"/>
</dbReference>
<dbReference type="InterPro" id="IPR027491">
    <property type="entry name" value="Ribosomal_bL31_A"/>
</dbReference>
<dbReference type="InterPro" id="IPR042105">
    <property type="entry name" value="Ribosomal_bL31_sf"/>
</dbReference>
<dbReference type="NCBIfam" id="TIGR00105">
    <property type="entry name" value="L31"/>
    <property type="match status" value="1"/>
</dbReference>
<dbReference type="NCBIfam" id="NF000612">
    <property type="entry name" value="PRK00019.1"/>
    <property type="match status" value="1"/>
</dbReference>
<dbReference type="PANTHER" id="PTHR33280">
    <property type="entry name" value="50S RIBOSOMAL PROTEIN L31, CHLOROPLASTIC"/>
    <property type="match status" value="1"/>
</dbReference>
<dbReference type="PANTHER" id="PTHR33280:SF1">
    <property type="entry name" value="LARGE RIBOSOMAL SUBUNIT PROTEIN BL31C"/>
    <property type="match status" value="1"/>
</dbReference>
<dbReference type="Pfam" id="PF01197">
    <property type="entry name" value="Ribosomal_L31"/>
    <property type="match status" value="1"/>
</dbReference>
<dbReference type="PRINTS" id="PR01249">
    <property type="entry name" value="RIBOSOMALL31"/>
</dbReference>
<dbReference type="SUPFAM" id="SSF143800">
    <property type="entry name" value="L28p-like"/>
    <property type="match status" value="1"/>
</dbReference>
<dbReference type="PROSITE" id="PS01143">
    <property type="entry name" value="RIBOSOMAL_L31"/>
    <property type="match status" value="1"/>
</dbReference>
<proteinExistence type="inferred from homology"/>